<reference key="1">
    <citation type="journal article" date="2009" name="PLoS Genet.">
        <title>The complete genome and proteome of Laribacter hongkongensis reveal potential mechanisms for adaptations to different temperatures and habitats.</title>
        <authorList>
            <person name="Woo P.C.Y."/>
            <person name="Lau S.K.P."/>
            <person name="Tse H."/>
            <person name="Teng J.L.L."/>
            <person name="Curreem S.O."/>
            <person name="Tsang A.K.L."/>
            <person name="Fan R.Y.Y."/>
            <person name="Wong G.K.M."/>
            <person name="Huang Y."/>
            <person name="Loman N.J."/>
            <person name="Snyder L.A.S."/>
            <person name="Cai J.J."/>
            <person name="Huang J.-D."/>
            <person name="Mak W."/>
            <person name="Pallen M.J."/>
            <person name="Lok S."/>
            <person name="Yuen K.-Y."/>
        </authorList>
    </citation>
    <scope>NUCLEOTIDE SEQUENCE [LARGE SCALE GENOMIC DNA]</scope>
    <source>
        <strain>HLHK9</strain>
    </source>
</reference>
<sequence length="85" mass="9403">MSAKGQMLQDPFLNILRKEHVPVSIYLVNGIKLQGQIESFDQYVVLLKNTVTQMVYKHAISTVVPARPVQVPHEHPAPAAGTAEI</sequence>
<comment type="function">
    <text evidence="1">RNA chaperone that binds small regulatory RNA (sRNAs) and mRNAs to facilitate mRNA translational regulation in response to envelope stress, environmental stress and changes in metabolite concentrations. Also binds with high specificity to tRNAs.</text>
</comment>
<comment type="subunit">
    <text evidence="1">Homohexamer.</text>
</comment>
<comment type="similarity">
    <text evidence="1">Belongs to the Hfq family.</text>
</comment>
<proteinExistence type="inferred from homology"/>
<dbReference type="EMBL" id="CP001154">
    <property type="protein sequence ID" value="ACO73683.1"/>
    <property type="molecule type" value="Genomic_DNA"/>
</dbReference>
<dbReference type="RefSeq" id="WP_012696175.1">
    <property type="nucleotide sequence ID" value="NC_012559.1"/>
</dbReference>
<dbReference type="SMR" id="C1DD48"/>
<dbReference type="STRING" id="557598.LHK_00690"/>
<dbReference type="GeneID" id="75109017"/>
<dbReference type="KEGG" id="lhk:LHK_00690"/>
<dbReference type="eggNOG" id="COG1923">
    <property type="taxonomic scope" value="Bacteria"/>
</dbReference>
<dbReference type="HOGENOM" id="CLU_113688_2_2_4"/>
<dbReference type="Proteomes" id="UP000002010">
    <property type="component" value="Chromosome"/>
</dbReference>
<dbReference type="GO" id="GO:0005829">
    <property type="term" value="C:cytosol"/>
    <property type="evidence" value="ECO:0007669"/>
    <property type="project" value="TreeGrafter"/>
</dbReference>
<dbReference type="GO" id="GO:0003723">
    <property type="term" value="F:RNA binding"/>
    <property type="evidence" value="ECO:0007669"/>
    <property type="project" value="UniProtKB-UniRule"/>
</dbReference>
<dbReference type="GO" id="GO:0006355">
    <property type="term" value="P:regulation of DNA-templated transcription"/>
    <property type="evidence" value="ECO:0007669"/>
    <property type="project" value="InterPro"/>
</dbReference>
<dbReference type="GO" id="GO:0043487">
    <property type="term" value="P:regulation of RNA stability"/>
    <property type="evidence" value="ECO:0007669"/>
    <property type="project" value="TreeGrafter"/>
</dbReference>
<dbReference type="GO" id="GO:0045974">
    <property type="term" value="P:regulation of translation, ncRNA-mediated"/>
    <property type="evidence" value="ECO:0007669"/>
    <property type="project" value="TreeGrafter"/>
</dbReference>
<dbReference type="CDD" id="cd01716">
    <property type="entry name" value="Hfq"/>
    <property type="match status" value="1"/>
</dbReference>
<dbReference type="FunFam" id="2.30.30.100:FF:000001">
    <property type="entry name" value="RNA-binding protein Hfq"/>
    <property type="match status" value="1"/>
</dbReference>
<dbReference type="Gene3D" id="2.30.30.100">
    <property type="match status" value="1"/>
</dbReference>
<dbReference type="HAMAP" id="MF_00436">
    <property type="entry name" value="Hfq"/>
    <property type="match status" value="1"/>
</dbReference>
<dbReference type="InterPro" id="IPR005001">
    <property type="entry name" value="Hfq"/>
</dbReference>
<dbReference type="InterPro" id="IPR010920">
    <property type="entry name" value="LSM_dom_sf"/>
</dbReference>
<dbReference type="InterPro" id="IPR047575">
    <property type="entry name" value="Sm"/>
</dbReference>
<dbReference type="NCBIfam" id="TIGR02383">
    <property type="entry name" value="Hfq"/>
    <property type="match status" value="1"/>
</dbReference>
<dbReference type="NCBIfam" id="NF001602">
    <property type="entry name" value="PRK00395.1"/>
    <property type="match status" value="1"/>
</dbReference>
<dbReference type="PANTHER" id="PTHR34772">
    <property type="entry name" value="RNA-BINDING PROTEIN HFQ"/>
    <property type="match status" value="1"/>
</dbReference>
<dbReference type="PANTHER" id="PTHR34772:SF1">
    <property type="entry name" value="RNA-BINDING PROTEIN HFQ"/>
    <property type="match status" value="1"/>
</dbReference>
<dbReference type="Pfam" id="PF17209">
    <property type="entry name" value="Hfq"/>
    <property type="match status" value="1"/>
</dbReference>
<dbReference type="SUPFAM" id="SSF50182">
    <property type="entry name" value="Sm-like ribonucleoproteins"/>
    <property type="match status" value="1"/>
</dbReference>
<dbReference type="PROSITE" id="PS52002">
    <property type="entry name" value="SM"/>
    <property type="match status" value="1"/>
</dbReference>
<gene>
    <name evidence="1" type="primary">hfq</name>
    <name type="ordered locus">LHK_00690</name>
</gene>
<keyword id="KW-1185">Reference proteome</keyword>
<keyword id="KW-0694">RNA-binding</keyword>
<keyword id="KW-0346">Stress response</keyword>
<evidence type="ECO:0000255" key="1">
    <source>
        <dbReference type="HAMAP-Rule" id="MF_00436"/>
    </source>
</evidence>
<evidence type="ECO:0000255" key="2">
    <source>
        <dbReference type="PROSITE-ProRule" id="PRU01346"/>
    </source>
</evidence>
<protein>
    <recommendedName>
        <fullName evidence="1">RNA-binding protein Hfq</fullName>
    </recommendedName>
</protein>
<accession>C1DD48</accession>
<organism>
    <name type="scientific">Laribacter hongkongensis (strain HLHK9)</name>
    <dbReference type="NCBI Taxonomy" id="557598"/>
    <lineage>
        <taxon>Bacteria</taxon>
        <taxon>Pseudomonadati</taxon>
        <taxon>Pseudomonadota</taxon>
        <taxon>Betaproteobacteria</taxon>
        <taxon>Neisseriales</taxon>
        <taxon>Aquaspirillaceae</taxon>
        <taxon>Laribacter</taxon>
    </lineage>
</organism>
<name>HFQ_LARHH</name>
<feature type="chain" id="PRO_1000135035" description="RNA-binding protein Hfq">
    <location>
        <begin position="1"/>
        <end position="85"/>
    </location>
</feature>
<feature type="domain" description="Sm" evidence="2">
    <location>
        <begin position="10"/>
        <end position="69"/>
    </location>
</feature>